<sequence>APSLGFHGVR</sequence>
<protein>
    <recommendedName>
        <fullName>Locustatachykinin-4</fullName>
    </recommendedName>
    <alternativeName>
        <fullName>Locustatachykinin IV</fullName>
        <shortName>TK-IV</shortName>
    </alternativeName>
</protein>
<dbReference type="PIR" id="B60073">
    <property type="entry name" value="ECLQ4M"/>
</dbReference>
<dbReference type="GO" id="GO:0005576">
    <property type="term" value="C:extracellular region"/>
    <property type="evidence" value="ECO:0007669"/>
    <property type="project" value="UniProtKB-SubCell"/>
</dbReference>
<dbReference type="GO" id="GO:0007218">
    <property type="term" value="P:neuropeptide signaling pathway"/>
    <property type="evidence" value="ECO:0007669"/>
    <property type="project" value="UniProtKB-KW"/>
</dbReference>
<dbReference type="InterPro" id="IPR013206">
    <property type="entry name" value="Lem_TRP"/>
</dbReference>
<dbReference type="Pfam" id="PF08262">
    <property type="entry name" value="Lem_TRP"/>
    <property type="match status" value="1"/>
</dbReference>
<organism>
    <name type="scientific">Locusta migratoria</name>
    <name type="common">Migratory locust</name>
    <dbReference type="NCBI Taxonomy" id="7004"/>
    <lineage>
        <taxon>Eukaryota</taxon>
        <taxon>Metazoa</taxon>
        <taxon>Ecdysozoa</taxon>
        <taxon>Arthropoda</taxon>
        <taxon>Hexapoda</taxon>
        <taxon>Insecta</taxon>
        <taxon>Pterygota</taxon>
        <taxon>Neoptera</taxon>
        <taxon>Polyneoptera</taxon>
        <taxon>Orthoptera</taxon>
        <taxon>Caelifera</taxon>
        <taxon>Acrididea</taxon>
        <taxon>Acridomorpha</taxon>
        <taxon>Acridoidea</taxon>
        <taxon>Acrididae</taxon>
        <taxon>Oedipodinae</taxon>
        <taxon>Locusta</taxon>
    </lineage>
</organism>
<proteinExistence type="evidence at protein level"/>
<comment type="function">
    <text>Myoactive peptide. Stimulates the contraction of the oviduct and foregut.</text>
</comment>
<comment type="subcellular location">
    <subcellularLocation>
        <location>Secreted</location>
    </subcellularLocation>
</comment>
<evidence type="ECO:0000269" key="1">
    <source>
    </source>
</evidence>
<name>TKL4_LOCMI</name>
<keyword id="KW-0027">Amidation</keyword>
<keyword id="KW-0903">Direct protein sequencing</keyword>
<keyword id="KW-0527">Neuropeptide</keyword>
<keyword id="KW-0964">Secreted</keyword>
<accession>P30250</accession>
<feature type="peptide" id="PRO_0000044435" description="Locustatachykinin-4">
    <location>
        <begin position="1"/>
        <end position="10"/>
    </location>
</feature>
<feature type="modified residue" description="Arginine amide" evidence="1">
    <location>
        <position position="10"/>
    </location>
</feature>
<reference key="1">
    <citation type="journal article" date="1990" name="Regul. Pept.">
        <title>Locustatachykinin III and IV: two additional insect neuropeptides with homology to peptides of the vertebrate tachykinin family.</title>
        <authorList>
            <person name="Schoofs L."/>
            <person name="Holman G.M."/>
            <person name="Hayes T.K."/>
            <person name="Kochansky J.P."/>
            <person name="Nachman R.J."/>
            <person name="de Loof A."/>
        </authorList>
    </citation>
    <scope>PROTEIN SEQUENCE</scope>
    <scope>AMIDATION AT ARG-10</scope>
    <source>
        <tissue>Brain</tissue>
    </source>
</reference>